<sequence>MELEYESKRPLYIPYAGPILLEFPLLNKGSAFTNDERNHFNLHGLLPEAVETIEEQAERAYRQYQDFKNDDDKHIYLRNIQDTNETLFYRLLEAHLSEMMPIIYTPTVGEACEHFSDIYRRARGLFISYPNREHIDDMLQNATKQNVKVIVVTDGERILGLGDQGIGGMGIPIGKLSLYTACGGISPAYTLPVVLDVGTNNPQRLNDPLYMGWRHPRISGDEYYAFVDEFIQAVKRRWPNVLLQFEDFAQKNATPLLNRYRDELCCFNDDIQGTAAVTLGSLIAASHAAGSQLRDQTVTFLGAGSAGCGIAEQIIAQMMSEGLSEIQARARIFMVDRFGLLTDKLPNLLDFQSKLVQKSDDLHHWNLHNDAISLLDVVRNAKPTVLIGVSGQPGLFTEELIREMHSHCARPIVMPLSNPTSRVEARPEDIINWTDGAALVATGSPFPPVSYKEKLYPIAQCNNSYIFPGIGLGVLASGASRVTDGMLMAASRALAESSPLARHGEGALLPNIDDIQAVSKAIAMRVGQAAQLQGVAIVTSEEALSKAIEHNYWQPQYRSYKRTSF</sequence>
<feature type="chain" id="PRO_0000160241" description="NAD-dependent malic enzyme">
    <location>
        <begin position="1"/>
        <end position="565"/>
    </location>
</feature>
<feature type="active site" description="Proton donor" evidence="1">
    <location>
        <position position="104"/>
    </location>
</feature>
<feature type="active site" description="Proton acceptor" evidence="1">
    <location>
        <position position="175"/>
    </location>
</feature>
<feature type="binding site" evidence="1">
    <location>
        <position position="157"/>
    </location>
    <ligand>
        <name>NAD(+)</name>
        <dbReference type="ChEBI" id="CHEBI:57540"/>
    </ligand>
</feature>
<feature type="binding site" evidence="1">
    <location>
        <position position="246"/>
    </location>
    <ligand>
        <name>a divalent metal cation</name>
        <dbReference type="ChEBI" id="CHEBI:60240"/>
    </ligand>
</feature>
<feature type="binding site" evidence="1">
    <location>
        <position position="247"/>
    </location>
    <ligand>
        <name>a divalent metal cation</name>
        <dbReference type="ChEBI" id="CHEBI:60240"/>
    </ligand>
</feature>
<feature type="binding site" evidence="1">
    <location>
        <position position="270"/>
    </location>
    <ligand>
        <name>a divalent metal cation</name>
        <dbReference type="ChEBI" id="CHEBI:60240"/>
    </ligand>
</feature>
<feature type="binding site" evidence="1">
    <location>
        <position position="270"/>
    </location>
    <ligand>
        <name>NAD(+)</name>
        <dbReference type="ChEBI" id="CHEBI:57540"/>
    </ligand>
</feature>
<feature type="binding site" evidence="1">
    <location>
        <position position="418"/>
    </location>
    <ligand>
        <name>NAD(+)</name>
        <dbReference type="ChEBI" id="CHEBI:57540"/>
    </ligand>
</feature>
<feature type="site" description="Important for activity" evidence="1">
    <location>
        <position position="270"/>
    </location>
</feature>
<dbReference type="EC" id="1.1.1.38" evidence="1"/>
<dbReference type="EMBL" id="BX936398">
    <property type="protein sequence ID" value="CAH20765.1"/>
    <property type="molecule type" value="Genomic_DNA"/>
</dbReference>
<dbReference type="RefSeq" id="WP_002211968.1">
    <property type="nucleotide sequence ID" value="NZ_CP009712.1"/>
</dbReference>
<dbReference type="SMR" id="Q66C80"/>
<dbReference type="KEGG" id="ypo:BZ17_989"/>
<dbReference type="KEGG" id="yps:YPTB1526"/>
<dbReference type="PATRIC" id="fig|273123.14.peg.1049"/>
<dbReference type="Proteomes" id="UP000001011">
    <property type="component" value="Chromosome"/>
</dbReference>
<dbReference type="GO" id="GO:0005829">
    <property type="term" value="C:cytosol"/>
    <property type="evidence" value="ECO:0007669"/>
    <property type="project" value="TreeGrafter"/>
</dbReference>
<dbReference type="GO" id="GO:0004471">
    <property type="term" value="F:malate dehydrogenase (decarboxylating) (NAD+) activity"/>
    <property type="evidence" value="ECO:0007669"/>
    <property type="project" value="UniProtKB-UniRule"/>
</dbReference>
<dbReference type="GO" id="GO:0046872">
    <property type="term" value="F:metal ion binding"/>
    <property type="evidence" value="ECO:0007669"/>
    <property type="project" value="UniProtKB-KW"/>
</dbReference>
<dbReference type="GO" id="GO:0051287">
    <property type="term" value="F:NAD binding"/>
    <property type="evidence" value="ECO:0007669"/>
    <property type="project" value="InterPro"/>
</dbReference>
<dbReference type="GO" id="GO:0008948">
    <property type="term" value="F:oxaloacetate decarboxylase activity"/>
    <property type="evidence" value="ECO:0007669"/>
    <property type="project" value="UniProtKB-UniRule"/>
</dbReference>
<dbReference type="GO" id="GO:0006108">
    <property type="term" value="P:malate metabolic process"/>
    <property type="evidence" value="ECO:0007669"/>
    <property type="project" value="TreeGrafter"/>
</dbReference>
<dbReference type="CDD" id="cd05312">
    <property type="entry name" value="NAD_bind_1_malic_enz"/>
    <property type="match status" value="1"/>
</dbReference>
<dbReference type="FunFam" id="3.40.50.10380:FF:000001">
    <property type="entry name" value="NAD-dependent malic enzyme"/>
    <property type="match status" value="1"/>
</dbReference>
<dbReference type="FunFam" id="3.40.50.720:FF:000055">
    <property type="entry name" value="NAD-dependent malic enzyme"/>
    <property type="match status" value="1"/>
</dbReference>
<dbReference type="Gene3D" id="3.40.50.10380">
    <property type="entry name" value="Malic enzyme, N-terminal domain"/>
    <property type="match status" value="1"/>
</dbReference>
<dbReference type="Gene3D" id="3.40.50.720">
    <property type="entry name" value="NAD(P)-binding Rossmann-like Domain"/>
    <property type="match status" value="1"/>
</dbReference>
<dbReference type="HAMAP" id="MF_01619">
    <property type="entry name" value="NAD_malic_enz"/>
    <property type="match status" value="1"/>
</dbReference>
<dbReference type="InterPro" id="IPR046346">
    <property type="entry name" value="Aminoacid_DH-like_N_sf"/>
</dbReference>
<dbReference type="InterPro" id="IPR015884">
    <property type="entry name" value="Malic_enzyme_CS"/>
</dbReference>
<dbReference type="InterPro" id="IPR012301">
    <property type="entry name" value="Malic_N_dom"/>
</dbReference>
<dbReference type="InterPro" id="IPR037062">
    <property type="entry name" value="Malic_N_dom_sf"/>
</dbReference>
<dbReference type="InterPro" id="IPR012302">
    <property type="entry name" value="Malic_NAD-bd"/>
</dbReference>
<dbReference type="InterPro" id="IPR001891">
    <property type="entry name" value="Malic_OxRdtase"/>
</dbReference>
<dbReference type="InterPro" id="IPR036291">
    <property type="entry name" value="NAD(P)-bd_dom_sf"/>
</dbReference>
<dbReference type="InterPro" id="IPR023667">
    <property type="entry name" value="NAD_malic_enz_proteobac"/>
</dbReference>
<dbReference type="NCBIfam" id="NF010052">
    <property type="entry name" value="PRK13529.1"/>
    <property type="match status" value="1"/>
</dbReference>
<dbReference type="PANTHER" id="PTHR23406">
    <property type="entry name" value="MALIC ENZYME-RELATED"/>
    <property type="match status" value="1"/>
</dbReference>
<dbReference type="PANTHER" id="PTHR23406:SF34">
    <property type="entry name" value="NAD-DEPENDENT MALIC ENZYME, MITOCHONDRIAL"/>
    <property type="match status" value="1"/>
</dbReference>
<dbReference type="Pfam" id="PF00390">
    <property type="entry name" value="malic"/>
    <property type="match status" value="1"/>
</dbReference>
<dbReference type="Pfam" id="PF03949">
    <property type="entry name" value="Malic_M"/>
    <property type="match status" value="1"/>
</dbReference>
<dbReference type="PIRSF" id="PIRSF000106">
    <property type="entry name" value="ME"/>
    <property type="match status" value="1"/>
</dbReference>
<dbReference type="PRINTS" id="PR00072">
    <property type="entry name" value="MALOXRDTASE"/>
</dbReference>
<dbReference type="SMART" id="SM01274">
    <property type="entry name" value="malic"/>
    <property type="match status" value="1"/>
</dbReference>
<dbReference type="SMART" id="SM00919">
    <property type="entry name" value="Malic_M"/>
    <property type="match status" value="1"/>
</dbReference>
<dbReference type="SUPFAM" id="SSF53223">
    <property type="entry name" value="Aminoacid dehydrogenase-like, N-terminal domain"/>
    <property type="match status" value="1"/>
</dbReference>
<dbReference type="SUPFAM" id="SSF51735">
    <property type="entry name" value="NAD(P)-binding Rossmann-fold domains"/>
    <property type="match status" value="1"/>
</dbReference>
<dbReference type="PROSITE" id="PS00331">
    <property type="entry name" value="MALIC_ENZYMES"/>
    <property type="match status" value="1"/>
</dbReference>
<name>MAO1_YERPS</name>
<accession>Q66C80</accession>
<keyword id="KW-0479">Metal-binding</keyword>
<keyword id="KW-0520">NAD</keyword>
<keyword id="KW-0560">Oxidoreductase</keyword>
<protein>
    <recommendedName>
        <fullName evidence="1">NAD-dependent malic enzyme</fullName>
        <shortName evidence="1">NAD-ME</shortName>
        <ecNumber evidence="1">1.1.1.38</ecNumber>
    </recommendedName>
</protein>
<proteinExistence type="inferred from homology"/>
<reference key="1">
    <citation type="journal article" date="2004" name="Proc. Natl. Acad. Sci. U.S.A.">
        <title>Insights into the evolution of Yersinia pestis through whole-genome comparison with Yersinia pseudotuberculosis.</title>
        <authorList>
            <person name="Chain P.S.G."/>
            <person name="Carniel E."/>
            <person name="Larimer F.W."/>
            <person name="Lamerdin J."/>
            <person name="Stoutland P.O."/>
            <person name="Regala W.M."/>
            <person name="Georgescu A.M."/>
            <person name="Vergez L.M."/>
            <person name="Land M.L."/>
            <person name="Motin V.L."/>
            <person name="Brubaker R.R."/>
            <person name="Fowler J."/>
            <person name="Hinnebusch J."/>
            <person name="Marceau M."/>
            <person name="Medigue C."/>
            <person name="Simonet M."/>
            <person name="Chenal-Francisque V."/>
            <person name="Souza B."/>
            <person name="Dacheux D."/>
            <person name="Elliott J.M."/>
            <person name="Derbise A."/>
            <person name="Hauser L.J."/>
            <person name="Garcia E."/>
        </authorList>
    </citation>
    <scope>NUCLEOTIDE SEQUENCE [LARGE SCALE GENOMIC DNA]</scope>
    <source>
        <strain>IP32953</strain>
    </source>
</reference>
<comment type="catalytic activity">
    <reaction evidence="1">
        <text>(S)-malate + NAD(+) = pyruvate + CO2 + NADH</text>
        <dbReference type="Rhea" id="RHEA:12653"/>
        <dbReference type="ChEBI" id="CHEBI:15361"/>
        <dbReference type="ChEBI" id="CHEBI:15589"/>
        <dbReference type="ChEBI" id="CHEBI:16526"/>
        <dbReference type="ChEBI" id="CHEBI:57540"/>
        <dbReference type="ChEBI" id="CHEBI:57945"/>
        <dbReference type="EC" id="1.1.1.38"/>
    </reaction>
</comment>
<comment type="catalytic activity">
    <reaction evidence="1">
        <text>oxaloacetate + H(+) = pyruvate + CO2</text>
        <dbReference type="Rhea" id="RHEA:15641"/>
        <dbReference type="ChEBI" id="CHEBI:15361"/>
        <dbReference type="ChEBI" id="CHEBI:15378"/>
        <dbReference type="ChEBI" id="CHEBI:16452"/>
        <dbReference type="ChEBI" id="CHEBI:16526"/>
        <dbReference type="EC" id="1.1.1.38"/>
    </reaction>
</comment>
<comment type="cofactor">
    <cofactor evidence="1">
        <name>Mg(2+)</name>
        <dbReference type="ChEBI" id="CHEBI:18420"/>
    </cofactor>
    <cofactor evidence="1">
        <name>Mn(2+)</name>
        <dbReference type="ChEBI" id="CHEBI:29035"/>
    </cofactor>
    <text evidence="1">Divalent metal cations. Prefers magnesium or manganese.</text>
</comment>
<comment type="subunit">
    <text evidence="1">Homotetramer.</text>
</comment>
<comment type="similarity">
    <text evidence="1">Belongs to the malic enzymes family.</text>
</comment>
<gene>
    <name evidence="1" type="primary">maeA</name>
    <name type="ordered locus">YPTB1526</name>
</gene>
<evidence type="ECO:0000255" key="1">
    <source>
        <dbReference type="HAMAP-Rule" id="MF_01619"/>
    </source>
</evidence>
<organism>
    <name type="scientific">Yersinia pseudotuberculosis serotype I (strain IP32953)</name>
    <dbReference type="NCBI Taxonomy" id="273123"/>
    <lineage>
        <taxon>Bacteria</taxon>
        <taxon>Pseudomonadati</taxon>
        <taxon>Pseudomonadota</taxon>
        <taxon>Gammaproteobacteria</taxon>
        <taxon>Enterobacterales</taxon>
        <taxon>Yersiniaceae</taxon>
        <taxon>Yersinia</taxon>
    </lineage>
</organism>